<organism>
    <name type="scientific">Aromatoleum aromaticum (strain DSM 19018 / LMG 30748 / EbN1)</name>
    <name type="common">Azoarcus sp. (strain EbN1)</name>
    <dbReference type="NCBI Taxonomy" id="76114"/>
    <lineage>
        <taxon>Bacteria</taxon>
        <taxon>Pseudomonadati</taxon>
        <taxon>Pseudomonadota</taxon>
        <taxon>Betaproteobacteria</taxon>
        <taxon>Rhodocyclales</taxon>
        <taxon>Rhodocyclaceae</taxon>
        <taxon>Aromatoleum</taxon>
    </lineage>
</organism>
<name>RL35_AROAE</name>
<comment type="similarity">
    <text evidence="1">Belongs to the bacterial ribosomal protein bL35 family.</text>
</comment>
<sequence>MPKMKTKSGAAKRFKVRASGGIKRSQAFKRHILTKKTTKSKRQLRGMTGVHAADEKLIRAMLPYA</sequence>
<dbReference type="EMBL" id="CR555306">
    <property type="protein sequence ID" value="CAI06584.1"/>
    <property type="molecule type" value="Genomic_DNA"/>
</dbReference>
<dbReference type="RefSeq" id="WP_011236315.1">
    <property type="nucleotide sequence ID" value="NC_006513.1"/>
</dbReference>
<dbReference type="SMR" id="Q5P7X7"/>
<dbReference type="STRING" id="76114.ebC8"/>
<dbReference type="KEGG" id="eba:ebC8"/>
<dbReference type="eggNOG" id="COG0291">
    <property type="taxonomic scope" value="Bacteria"/>
</dbReference>
<dbReference type="HOGENOM" id="CLU_169643_1_0_4"/>
<dbReference type="OrthoDB" id="47476at2"/>
<dbReference type="Proteomes" id="UP000006552">
    <property type="component" value="Chromosome"/>
</dbReference>
<dbReference type="GO" id="GO:0022625">
    <property type="term" value="C:cytosolic large ribosomal subunit"/>
    <property type="evidence" value="ECO:0007669"/>
    <property type="project" value="TreeGrafter"/>
</dbReference>
<dbReference type="GO" id="GO:0003735">
    <property type="term" value="F:structural constituent of ribosome"/>
    <property type="evidence" value="ECO:0007669"/>
    <property type="project" value="InterPro"/>
</dbReference>
<dbReference type="GO" id="GO:0006412">
    <property type="term" value="P:translation"/>
    <property type="evidence" value="ECO:0007669"/>
    <property type="project" value="UniProtKB-UniRule"/>
</dbReference>
<dbReference type="FunFam" id="4.10.410.60:FF:000001">
    <property type="entry name" value="50S ribosomal protein L35"/>
    <property type="match status" value="1"/>
</dbReference>
<dbReference type="Gene3D" id="4.10.410.60">
    <property type="match status" value="1"/>
</dbReference>
<dbReference type="HAMAP" id="MF_00514">
    <property type="entry name" value="Ribosomal_bL35"/>
    <property type="match status" value="1"/>
</dbReference>
<dbReference type="InterPro" id="IPR001706">
    <property type="entry name" value="Ribosomal_bL35"/>
</dbReference>
<dbReference type="InterPro" id="IPR021137">
    <property type="entry name" value="Ribosomal_bL35-like"/>
</dbReference>
<dbReference type="InterPro" id="IPR018265">
    <property type="entry name" value="Ribosomal_bL35_CS"/>
</dbReference>
<dbReference type="InterPro" id="IPR037229">
    <property type="entry name" value="Ribosomal_bL35_sf"/>
</dbReference>
<dbReference type="NCBIfam" id="TIGR00001">
    <property type="entry name" value="rpmI_bact"/>
    <property type="match status" value="1"/>
</dbReference>
<dbReference type="PANTHER" id="PTHR33343">
    <property type="entry name" value="54S RIBOSOMAL PROTEIN BL35M"/>
    <property type="match status" value="1"/>
</dbReference>
<dbReference type="PANTHER" id="PTHR33343:SF1">
    <property type="entry name" value="LARGE RIBOSOMAL SUBUNIT PROTEIN BL35M"/>
    <property type="match status" value="1"/>
</dbReference>
<dbReference type="Pfam" id="PF01632">
    <property type="entry name" value="Ribosomal_L35p"/>
    <property type="match status" value="1"/>
</dbReference>
<dbReference type="PRINTS" id="PR00064">
    <property type="entry name" value="RIBOSOMALL35"/>
</dbReference>
<dbReference type="SUPFAM" id="SSF143034">
    <property type="entry name" value="L35p-like"/>
    <property type="match status" value="1"/>
</dbReference>
<dbReference type="PROSITE" id="PS00936">
    <property type="entry name" value="RIBOSOMAL_L35"/>
    <property type="match status" value="1"/>
</dbReference>
<gene>
    <name evidence="1" type="primary">rpmI</name>
    <name type="ordered locus">AZOSEA04620</name>
    <name type="ORF">ebC8</name>
</gene>
<evidence type="ECO:0000255" key="1">
    <source>
        <dbReference type="HAMAP-Rule" id="MF_00514"/>
    </source>
</evidence>
<evidence type="ECO:0000305" key="2"/>
<proteinExistence type="inferred from homology"/>
<feature type="chain" id="PRO_0000258634" description="Large ribosomal subunit protein bL35">
    <location>
        <begin position="1"/>
        <end position="65"/>
    </location>
</feature>
<accession>Q5P7X7</accession>
<reference key="1">
    <citation type="journal article" date="2005" name="Arch. Microbiol.">
        <title>The genome sequence of an anaerobic aromatic-degrading denitrifying bacterium, strain EbN1.</title>
        <authorList>
            <person name="Rabus R."/>
            <person name="Kube M."/>
            <person name="Heider J."/>
            <person name="Beck A."/>
            <person name="Heitmann K."/>
            <person name="Widdel F."/>
            <person name="Reinhardt R."/>
        </authorList>
    </citation>
    <scope>NUCLEOTIDE SEQUENCE [LARGE SCALE GENOMIC DNA]</scope>
    <source>
        <strain>DSM 19018 / LMG 30748 / EbN1</strain>
    </source>
</reference>
<protein>
    <recommendedName>
        <fullName evidence="1">Large ribosomal subunit protein bL35</fullName>
    </recommendedName>
    <alternativeName>
        <fullName evidence="2">50S ribosomal protein L35</fullName>
    </alternativeName>
</protein>
<keyword id="KW-1185">Reference proteome</keyword>
<keyword id="KW-0687">Ribonucleoprotein</keyword>
<keyword id="KW-0689">Ribosomal protein</keyword>